<protein>
    <recommendedName>
        <fullName evidence="1">NADH-quinone oxidoreductase subunit D</fullName>
        <ecNumber evidence="1">7.1.1.-</ecNumber>
    </recommendedName>
    <alternativeName>
        <fullName evidence="1">NADH dehydrogenase I subunit D</fullName>
    </alternativeName>
    <alternativeName>
        <fullName evidence="1">NDH-1 subunit D</fullName>
    </alternativeName>
</protein>
<sequence>MAEYKNYTLNFGPVHPAAHGVLRLILELDGENVVRADPHVGLLHRGTEKLAEFKPYNQSIGYMDRLDYVSMMCNEHAYVMAIEKLLQLEVPERAKYIRVMFAEMTRILNHLLWVAACGIDLGAMTVFLYAFRVREDLFDCYEAVSGARMHAAYFRPGGVARDLPTQMPQYQKTRFTSKRKAKKLNEPRQGSMLDFLDHFVVDFEKSLDEIDTLLTDNRLWKQRTVDIGTVTAERAKELGFTGPMLRGSGVAWDLRKTQPYEVYHKLEFDIPIGANGDCYDRYLVRMAEMRESNKLIKQCVDWLRANPGPVLSDNHKVAPPKRNAMKNNMEELIHHFKLFSEGYCTTEGEVYVGTEHPKGEFGVYIKSDGANKPYRLKMRAPGFAHISAMDELLSGHMLADTPAIISTIDVVFGDVDR</sequence>
<reference key="1">
    <citation type="journal article" date="2009" name="PLoS Pathog.">
        <title>Molecular evolutionary consequences of niche restriction in Francisella tularensis, a facultative intracellular pathogen.</title>
        <authorList>
            <person name="Larsson P."/>
            <person name="Elfsmark D."/>
            <person name="Svensson K."/>
            <person name="Wikstroem P."/>
            <person name="Forsman M."/>
            <person name="Brettin T."/>
            <person name="Keim P."/>
            <person name="Johansson A."/>
        </authorList>
    </citation>
    <scope>NUCLEOTIDE SEQUENCE [LARGE SCALE GENOMIC DNA]</scope>
    <source>
        <strain>FSC147</strain>
    </source>
</reference>
<proteinExistence type="inferred from homology"/>
<evidence type="ECO:0000255" key="1">
    <source>
        <dbReference type="HAMAP-Rule" id="MF_01358"/>
    </source>
</evidence>
<dbReference type="EC" id="7.1.1.-" evidence="1"/>
<dbReference type="EMBL" id="CP000915">
    <property type="protein sequence ID" value="ACD30197.1"/>
    <property type="molecule type" value="Genomic_DNA"/>
</dbReference>
<dbReference type="SMR" id="B2SEV2"/>
<dbReference type="KEGG" id="ftm:FTM_0097"/>
<dbReference type="HOGENOM" id="CLU_015134_1_1_6"/>
<dbReference type="GO" id="GO:0005886">
    <property type="term" value="C:plasma membrane"/>
    <property type="evidence" value="ECO:0007669"/>
    <property type="project" value="UniProtKB-SubCell"/>
</dbReference>
<dbReference type="GO" id="GO:0051287">
    <property type="term" value="F:NAD binding"/>
    <property type="evidence" value="ECO:0007669"/>
    <property type="project" value="InterPro"/>
</dbReference>
<dbReference type="GO" id="GO:0050136">
    <property type="term" value="F:NADH:ubiquinone reductase (non-electrogenic) activity"/>
    <property type="evidence" value="ECO:0007669"/>
    <property type="project" value="UniProtKB-UniRule"/>
</dbReference>
<dbReference type="GO" id="GO:0048038">
    <property type="term" value="F:quinone binding"/>
    <property type="evidence" value="ECO:0007669"/>
    <property type="project" value="UniProtKB-KW"/>
</dbReference>
<dbReference type="FunFam" id="1.10.645.10:FF:000005">
    <property type="entry name" value="NADH-quinone oxidoreductase subunit D"/>
    <property type="match status" value="1"/>
</dbReference>
<dbReference type="Gene3D" id="1.10.645.10">
    <property type="entry name" value="Cytochrome-c3 Hydrogenase, chain B"/>
    <property type="match status" value="1"/>
</dbReference>
<dbReference type="HAMAP" id="MF_01358">
    <property type="entry name" value="NDH1_NuoD"/>
    <property type="match status" value="1"/>
</dbReference>
<dbReference type="InterPro" id="IPR001135">
    <property type="entry name" value="NADH_Q_OxRdtase_suD"/>
</dbReference>
<dbReference type="InterPro" id="IPR014029">
    <property type="entry name" value="NADH_UbQ_OxRdtase_49kDa_CS"/>
</dbReference>
<dbReference type="InterPro" id="IPR022885">
    <property type="entry name" value="NDH1_su_D/H"/>
</dbReference>
<dbReference type="InterPro" id="IPR029014">
    <property type="entry name" value="NiFe-Hase_large"/>
</dbReference>
<dbReference type="NCBIfam" id="TIGR01962">
    <property type="entry name" value="NuoD"/>
    <property type="match status" value="1"/>
</dbReference>
<dbReference type="NCBIfam" id="NF004739">
    <property type="entry name" value="PRK06075.1"/>
    <property type="match status" value="1"/>
</dbReference>
<dbReference type="PANTHER" id="PTHR11993:SF10">
    <property type="entry name" value="NADH DEHYDROGENASE [UBIQUINONE] IRON-SULFUR PROTEIN 2, MITOCHONDRIAL"/>
    <property type="match status" value="1"/>
</dbReference>
<dbReference type="PANTHER" id="PTHR11993">
    <property type="entry name" value="NADH-UBIQUINONE OXIDOREDUCTASE 49 KDA SUBUNIT"/>
    <property type="match status" value="1"/>
</dbReference>
<dbReference type="Pfam" id="PF00346">
    <property type="entry name" value="Complex1_49kDa"/>
    <property type="match status" value="1"/>
</dbReference>
<dbReference type="SUPFAM" id="SSF56762">
    <property type="entry name" value="HydB/Nqo4-like"/>
    <property type="match status" value="1"/>
</dbReference>
<dbReference type="PROSITE" id="PS00535">
    <property type="entry name" value="COMPLEX1_49K"/>
    <property type="match status" value="1"/>
</dbReference>
<feature type="chain" id="PRO_0000371868" description="NADH-quinone oxidoreductase subunit D">
    <location>
        <begin position="1"/>
        <end position="417"/>
    </location>
</feature>
<keyword id="KW-0997">Cell inner membrane</keyword>
<keyword id="KW-1003">Cell membrane</keyword>
<keyword id="KW-0472">Membrane</keyword>
<keyword id="KW-0520">NAD</keyword>
<keyword id="KW-0874">Quinone</keyword>
<keyword id="KW-1278">Translocase</keyword>
<keyword id="KW-0813">Transport</keyword>
<keyword id="KW-0830">Ubiquinone</keyword>
<organism>
    <name type="scientific">Francisella tularensis subsp. mediasiatica (strain FSC147)</name>
    <dbReference type="NCBI Taxonomy" id="441952"/>
    <lineage>
        <taxon>Bacteria</taxon>
        <taxon>Pseudomonadati</taxon>
        <taxon>Pseudomonadota</taxon>
        <taxon>Gammaproteobacteria</taxon>
        <taxon>Thiotrichales</taxon>
        <taxon>Francisellaceae</taxon>
        <taxon>Francisella</taxon>
    </lineage>
</organism>
<gene>
    <name evidence="1" type="primary">nuoD</name>
    <name type="ordered locus">FTM_0097</name>
</gene>
<comment type="function">
    <text evidence="1">NDH-1 shuttles electrons from NADH, via FMN and iron-sulfur (Fe-S) centers, to quinones in the respiratory chain. The immediate electron acceptor for the enzyme in this species is believed to be ubiquinone. Couples the redox reaction to proton translocation (for every two electrons transferred, four hydrogen ions are translocated across the cytoplasmic membrane), and thus conserves the redox energy in a proton gradient.</text>
</comment>
<comment type="catalytic activity">
    <reaction evidence="1">
        <text>a quinone + NADH + 5 H(+)(in) = a quinol + NAD(+) + 4 H(+)(out)</text>
        <dbReference type="Rhea" id="RHEA:57888"/>
        <dbReference type="ChEBI" id="CHEBI:15378"/>
        <dbReference type="ChEBI" id="CHEBI:24646"/>
        <dbReference type="ChEBI" id="CHEBI:57540"/>
        <dbReference type="ChEBI" id="CHEBI:57945"/>
        <dbReference type="ChEBI" id="CHEBI:132124"/>
    </reaction>
</comment>
<comment type="subunit">
    <text evidence="1">NDH-1 is composed of 14 different subunits. Subunits NuoB, C, D, E, F, and G constitute the peripheral sector of the complex.</text>
</comment>
<comment type="subcellular location">
    <subcellularLocation>
        <location evidence="1">Cell inner membrane</location>
        <topology evidence="1">Peripheral membrane protein</topology>
        <orientation evidence="1">Cytoplasmic side</orientation>
    </subcellularLocation>
</comment>
<comment type="similarity">
    <text evidence="1">Belongs to the complex I 49 kDa subunit family.</text>
</comment>
<name>NUOD_FRATM</name>
<accession>B2SEV2</accession>